<dbReference type="EC" id="2.3.1.251" evidence="1"/>
<dbReference type="EMBL" id="BX640449">
    <property type="protein sequence ID" value="CAE34545.1"/>
    <property type="molecule type" value="Genomic_DNA"/>
</dbReference>
<dbReference type="RefSeq" id="WP_003814556.1">
    <property type="nucleotide sequence ID" value="NC_002927.3"/>
</dbReference>
<dbReference type="SMR" id="Q7WFT9"/>
<dbReference type="GeneID" id="56477328"/>
<dbReference type="KEGG" id="bbr:BB4181"/>
<dbReference type="eggNOG" id="ENOG502Z7SY">
    <property type="taxonomic scope" value="Bacteria"/>
</dbReference>
<dbReference type="HOGENOM" id="CLU_104099_0_0_4"/>
<dbReference type="BRENDA" id="2.3.1.251">
    <property type="organism ID" value="227"/>
</dbReference>
<dbReference type="Proteomes" id="UP000001027">
    <property type="component" value="Chromosome"/>
</dbReference>
<dbReference type="GO" id="GO:0009279">
    <property type="term" value="C:cell outer membrane"/>
    <property type="evidence" value="ECO:0000250"/>
    <property type="project" value="UniProtKB"/>
</dbReference>
<dbReference type="GO" id="GO:0016416">
    <property type="term" value="F:O-palmitoyltransferase activity"/>
    <property type="evidence" value="ECO:0000315"/>
    <property type="project" value="UniProtKB"/>
</dbReference>
<dbReference type="GO" id="GO:0009245">
    <property type="term" value="P:lipid A biosynthetic process"/>
    <property type="evidence" value="ECO:0000315"/>
    <property type="project" value="UniProtKB"/>
</dbReference>
<dbReference type="FunFam" id="2.40.160.20:FF:000002">
    <property type="entry name" value="Lipid A palmitoyltransferase PagP"/>
    <property type="match status" value="1"/>
</dbReference>
<dbReference type="Gene3D" id="2.40.160.20">
    <property type="match status" value="1"/>
</dbReference>
<dbReference type="HAMAP" id="MF_00837">
    <property type="entry name" value="PagP_transferase"/>
    <property type="match status" value="1"/>
</dbReference>
<dbReference type="InterPro" id="IPR009746">
    <property type="entry name" value="LipidA_acyl_PagP"/>
</dbReference>
<dbReference type="InterPro" id="IPR011250">
    <property type="entry name" value="OMP/PagP_b-brl"/>
</dbReference>
<dbReference type="NCBIfam" id="NF008271">
    <property type="entry name" value="PRK11045.1"/>
    <property type="match status" value="1"/>
</dbReference>
<dbReference type="Pfam" id="PF07017">
    <property type="entry name" value="PagP"/>
    <property type="match status" value="1"/>
</dbReference>
<dbReference type="SUPFAM" id="SSF56925">
    <property type="entry name" value="OMPA-like"/>
    <property type="match status" value="1"/>
</dbReference>
<dbReference type="PROSITE" id="PS51257">
    <property type="entry name" value="PROKAR_LIPOPROTEIN"/>
    <property type="match status" value="1"/>
</dbReference>
<accession>Q7WFT9</accession>
<keyword id="KW-0012">Acyltransferase</keyword>
<keyword id="KW-0998">Cell outer membrane</keyword>
<keyword id="KW-0449">Lipoprotein</keyword>
<keyword id="KW-0472">Membrane</keyword>
<keyword id="KW-0564">Palmitate</keyword>
<keyword id="KW-0732">Signal</keyword>
<keyword id="KW-0808">Transferase</keyword>
<proteinExistence type="evidence at protein level"/>
<organism>
    <name type="scientific">Bordetella bronchiseptica (strain ATCC BAA-588 / NCTC 13252 / RB50)</name>
    <name type="common">Alcaligenes bronchisepticus</name>
    <dbReference type="NCBI Taxonomy" id="257310"/>
    <lineage>
        <taxon>Bacteria</taxon>
        <taxon>Pseudomonadati</taxon>
        <taxon>Pseudomonadota</taxon>
        <taxon>Betaproteobacteria</taxon>
        <taxon>Burkholderiales</taxon>
        <taxon>Alcaligenaceae</taxon>
        <taxon>Bordetella</taxon>
    </lineage>
</organism>
<reference key="1">
    <citation type="journal article" date="2003" name="Nat. Genet.">
        <title>Comparative analysis of the genome sequences of Bordetella pertussis, Bordetella parapertussis and Bordetella bronchiseptica.</title>
        <authorList>
            <person name="Parkhill J."/>
            <person name="Sebaihia M."/>
            <person name="Preston A."/>
            <person name="Murphy L.D."/>
            <person name="Thomson N.R."/>
            <person name="Harris D.E."/>
            <person name="Holden M.T.G."/>
            <person name="Churcher C.M."/>
            <person name="Bentley S.D."/>
            <person name="Mungall K.L."/>
            <person name="Cerdeno-Tarraga A.-M."/>
            <person name="Temple L."/>
            <person name="James K.D."/>
            <person name="Harris B."/>
            <person name="Quail M.A."/>
            <person name="Achtman M."/>
            <person name="Atkin R."/>
            <person name="Baker S."/>
            <person name="Basham D."/>
            <person name="Bason N."/>
            <person name="Cherevach I."/>
            <person name="Chillingworth T."/>
            <person name="Collins M."/>
            <person name="Cronin A."/>
            <person name="Davis P."/>
            <person name="Doggett J."/>
            <person name="Feltwell T."/>
            <person name="Goble A."/>
            <person name="Hamlin N."/>
            <person name="Hauser H."/>
            <person name="Holroyd S."/>
            <person name="Jagels K."/>
            <person name="Leather S."/>
            <person name="Moule S."/>
            <person name="Norberczak H."/>
            <person name="O'Neil S."/>
            <person name="Ormond D."/>
            <person name="Price C."/>
            <person name="Rabbinowitsch E."/>
            <person name="Rutter S."/>
            <person name="Sanders M."/>
            <person name="Saunders D."/>
            <person name="Seeger K."/>
            <person name="Sharp S."/>
            <person name="Simmonds M."/>
            <person name="Skelton J."/>
            <person name="Squares R."/>
            <person name="Squares S."/>
            <person name="Stevens K."/>
            <person name="Unwin L."/>
            <person name="Whitehead S."/>
            <person name="Barrell B.G."/>
            <person name="Maskell D.J."/>
        </authorList>
    </citation>
    <scope>NUCLEOTIDE SEQUENCE [LARGE SCALE GENOMIC DNA]</scope>
    <source>
        <strain>ATCC BAA-588 / NCTC 13252 / RB50</strain>
    </source>
</reference>
<reference key="2">
    <citation type="journal article" date="2003" name="Mol. Microbiol.">
        <title>Bordetella bronchiseptica PagP is a Bvg-regulated lipid A palmitoyl transferase that is required for persistent colonization of the mouse respiratory tract.</title>
        <authorList>
            <person name="Preston A."/>
            <person name="Maxim E."/>
            <person name="Toland E."/>
            <person name="Pishko E.J."/>
            <person name="Harvill E.T."/>
            <person name="Caroff M."/>
            <person name="Maskell D.J."/>
        </authorList>
    </citation>
    <scope>FUNCTION AS PALMITOYL TRANSFERASE</scope>
    <scope>DISRUPTION PHENOTYPE</scope>
    <scope>INDUCTION</scope>
    <source>
        <strain>ATCC BAA-588 / NCTC 13252 / RB50</strain>
    </source>
</reference>
<reference key="3">
    <citation type="journal article" date="2004" name="Infect. Immun.">
        <title>pagP is required for resistance to antibody-mediated complement lysis during Bordetella bronchiseptica respiratory infection.</title>
        <authorList>
            <person name="Pilione M.R."/>
            <person name="Pishko E.J."/>
            <person name="Preston A."/>
            <person name="Maskell D.J."/>
            <person name="Harvill E.T."/>
        </authorList>
    </citation>
    <scope>RESISTANCE TO ANTIBODY-MEDIATED COMPLEMENT LYSIS</scope>
    <source>
        <strain>ATCC BAA-588 / NCTC 13252 / RB50</strain>
    </source>
</reference>
<sequence length="182" mass="20276">MTQYFRALAFFLLLVPATAMACDGWPSWARGACQRVDQIWNEGGNDLYLTGYSWHNRAMYSSDKIRSFNELAWGGGLGKSIYDEDGDWQGLYAMAFLDSHSDIEPIAGYGFQKIGRIGADTRLGIGYTVFLTSRSDIMSRVPFPGILPLVSAGYRDATLYATYIPGGKGNGNVLFMFGRWEF</sequence>
<evidence type="ECO:0000255" key="1">
    <source>
        <dbReference type="HAMAP-Rule" id="MF_00837"/>
    </source>
</evidence>
<evidence type="ECO:0000269" key="2">
    <source>
    </source>
</evidence>
<evidence type="ECO:0000269" key="3">
    <source>
    </source>
</evidence>
<evidence type="ECO:0000305" key="4"/>
<comment type="function">
    <text evidence="2 3">Transfers a fatty acid residue from the sn-1 position of a phospholipid to the N-linked hydroxyfatty acid chain on the proximal unit of lipid A or its precursors. Required for resistance to cationic antimicrobial peptides (CAMPs). Modifications of lipid A with an acyl chain to evade host immune defenses by resisting antibody-mediated complement lysis during respiratory infection.</text>
</comment>
<comment type="catalytic activity">
    <reaction evidence="1">
        <text>a lipid A + a 1,2-diacyl-sn-glycero-3-phosphocholine = a hepta-acyl lipid A + a 2-acyl-sn-glycero-3-phosphocholine</text>
        <dbReference type="Rhea" id="RHEA:74275"/>
        <dbReference type="ChEBI" id="CHEBI:57643"/>
        <dbReference type="ChEBI" id="CHEBI:57875"/>
        <dbReference type="ChEBI" id="CHEBI:193141"/>
        <dbReference type="ChEBI" id="CHEBI:193142"/>
        <dbReference type="EC" id="2.3.1.251"/>
    </reaction>
</comment>
<comment type="catalytic activity">
    <reaction evidence="1">
        <text>a lipid IVA + a 1,2-diacyl-sn-glycero-3-phosphocholine = a lipid IVB + a 2-acyl-sn-glycero-3-phosphocholine</text>
        <dbReference type="Rhea" id="RHEA:74279"/>
        <dbReference type="ChEBI" id="CHEBI:57643"/>
        <dbReference type="ChEBI" id="CHEBI:57875"/>
        <dbReference type="ChEBI" id="CHEBI:176425"/>
        <dbReference type="ChEBI" id="CHEBI:193143"/>
        <dbReference type="EC" id="2.3.1.251"/>
    </reaction>
</comment>
<comment type="catalytic activity">
    <reaction evidence="1">
        <text>a lipid IIA + a 1,2-diacyl-sn-glycero-3-phosphocholine = a lipid IIB + a 2-acyl-sn-glycero-3-phosphocholine</text>
        <dbReference type="Rhea" id="RHEA:74283"/>
        <dbReference type="ChEBI" id="CHEBI:57643"/>
        <dbReference type="ChEBI" id="CHEBI:57875"/>
        <dbReference type="ChEBI" id="CHEBI:193144"/>
        <dbReference type="ChEBI" id="CHEBI:193145"/>
        <dbReference type="EC" id="2.3.1.251"/>
    </reaction>
</comment>
<comment type="subunit">
    <text evidence="1">Homodimer.</text>
</comment>
<comment type="subcellular location">
    <subcellularLocation>
        <location evidence="1 4">Cell outer membrane</location>
        <topology evidence="1 4">Lipid-anchor</topology>
    </subcellularLocation>
</comment>
<comment type="induction">
    <text evidence="2">The expression of pagP is down-regulated in Bvg-minus phase and up-regulated in Bvg-plus phase.</text>
</comment>
<comment type="disruption phenotype">
    <text evidence="2">Disruption of this gene suppresses the esterified palmitate chain (16:0) in the lipid A and compromises the ability to persist in a mouse after 7 days. However, the mutant is no different from wild-type in its ability to colonize and persist within the respiratory tract during the early part of the infection.</text>
</comment>
<comment type="similarity">
    <text evidence="1 4">Belongs to the lipid A palmitoyltransferase family.</text>
</comment>
<feature type="signal peptide" evidence="1">
    <location>
        <begin position="1"/>
        <end position="21"/>
    </location>
</feature>
<feature type="chain" id="PRO_0000414427" description="Lipid A acyltransferase PagP">
    <location>
        <begin position="22"/>
        <end position="182"/>
    </location>
</feature>
<feature type="active site" evidence="1">
    <location>
        <position position="55"/>
    </location>
</feature>
<feature type="active site" evidence="1">
    <location>
        <position position="98"/>
    </location>
</feature>
<feature type="active site" evidence="1">
    <location>
        <position position="99"/>
    </location>
</feature>
<feature type="site" description="Role in lipopolysaccharide recognition" evidence="1">
    <location>
        <position position="64"/>
    </location>
</feature>
<feature type="lipid moiety-binding region" description="N-palmitoyl cysteine" evidence="1">
    <location>
        <position position="22"/>
    </location>
</feature>
<feature type="lipid moiety-binding region" description="S-diacylglycerol cysteine" evidence="1">
    <location>
        <position position="22"/>
    </location>
</feature>
<name>PAGP_BORBR</name>
<protein>
    <recommendedName>
        <fullName evidence="1">Lipid A acyltransferase PagP</fullName>
        <ecNumber evidence="1">2.3.1.251</ecNumber>
    </recommendedName>
    <alternativeName>
        <fullName evidence="1">Lipid A acylation protein</fullName>
    </alternativeName>
</protein>
<gene>
    <name evidence="1" type="primary">pagP</name>
    <name type="ordered locus">BB4181</name>
</gene>